<comment type="function">
    <text evidence="1">Functions as a sorting receptor in the Golgi compartment required for the intracellular sorting and delivery of soluble vacuolar proteins, like carboxypeptidase Y (CPY) and proteinase A. Executes multiple rounds of sorting by cycling between the late Golgi and a prevacuolar endosome-like compartment (By similarity).</text>
</comment>
<comment type="subcellular location">
    <subcellularLocation>
        <location evidence="1">Golgi apparatus</location>
        <location evidence="1">trans-Golgi network membrane</location>
        <topology evidence="1">Multi-pass membrane protein</topology>
    </subcellularLocation>
    <subcellularLocation>
        <location evidence="1">Prevacuolar compartment membrane</location>
        <topology evidence="1">Multi-pass membrane protein</topology>
    </subcellularLocation>
    <text evidence="1">Cycles between the Golgi apparatus and the prevacuolar compartment.</text>
</comment>
<comment type="similarity">
    <text evidence="4">Belongs to the VPS10-related sortilin family.</text>
</comment>
<feature type="signal peptide" evidence="2">
    <location>
        <begin position="1"/>
        <end position="21"/>
    </location>
</feature>
<feature type="chain" id="PRO_0000407534" description="Vacuolar protein sorting/targeting protein 10">
    <location>
        <begin position="22"/>
        <end position="1490"/>
    </location>
</feature>
<feature type="topological domain" description="Lumenal" evidence="2">
    <location>
        <begin position="22"/>
        <end position="1354"/>
    </location>
</feature>
<feature type="transmembrane region" description="Helical" evidence="2">
    <location>
        <begin position="1355"/>
        <end position="1375"/>
    </location>
</feature>
<feature type="topological domain" description="Cytoplasmic" evidence="2">
    <location>
        <begin position="1376"/>
        <end position="1405"/>
    </location>
</feature>
<feature type="transmembrane region" description="Helical" evidence="2">
    <location>
        <begin position="1406"/>
        <end position="1426"/>
    </location>
</feature>
<feature type="topological domain" description="Lumenal" evidence="2">
    <location>
        <begin position="1427"/>
        <end position="1490"/>
    </location>
</feature>
<feature type="repeat" description="BNR 1">
    <location>
        <begin position="97"/>
        <end position="107"/>
    </location>
</feature>
<feature type="repeat" description="BNR 2">
    <location>
        <begin position="364"/>
        <end position="374"/>
    </location>
</feature>
<feature type="repeat" description="BNR 3">
    <location>
        <begin position="426"/>
        <end position="436"/>
    </location>
</feature>
<feature type="repeat" description="BNR 4">
    <location>
        <begin position="719"/>
        <end position="730"/>
    </location>
</feature>
<feature type="repeat" description="BNR 5">
    <location>
        <begin position="1102"/>
        <end position="1112"/>
    </location>
</feature>
<feature type="repeat" description="BNR 6">
    <location>
        <begin position="1143"/>
        <end position="1153"/>
    </location>
</feature>
<feature type="region of interest" description="Disordered" evidence="3">
    <location>
        <begin position="1016"/>
        <end position="1048"/>
    </location>
</feature>
<feature type="region of interest" description="Disordered" evidence="3">
    <location>
        <begin position="1465"/>
        <end position="1490"/>
    </location>
</feature>
<feature type="compositionally biased region" description="Basic and acidic residues" evidence="3">
    <location>
        <begin position="1038"/>
        <end position="1048"/>
    </location>
</feature>
<feature type="compositionally biased region" description="Acidic residues" evidence="3">
    <location>
        <begin position="1474"/>
        <end position="1490"/>
    </location>
</feature>
<feature type="glycosylation site" description="N-linked (GlcNAc...) asparagine" evidence="2">
    <location>
        <position position="285"/>
    </location>
</feature>
<feature type="glycosylation site" description="N-linked (GlcNAc...) asparagine" evidence="2">
    <location>
        <position position="309"/>
    </location>
</feature>
<feature type="glycosylation site" description="N-linked (GlcNAc...) asparagine" evidence="2">
    <location>
        <position position="970"/>
    </location>
</feature>
<feature type="glycosylation site" description="N-linked (GlcNAc...) asparagine" evidence="2">
    <location>
        <position position="1265"/>
    </location>
</feature>
<keyword id="KW-0325">Glycoprotein</keyword>
<keyword id="KW-0333">Golgi apparatus</keyword>
<keyword id="KW-0472">Membrane</keyword>
<keyword id="KW-0653">Protein transport</keyword>
<keyword id="KW-0675">Receptor</keyword>
<keyword id="KW-1185">Reference proteome</keyword>
<keyword id="KW-0677">Repeat</keyword>
<keyword id="KW-0732">Signal</keyword>
<keyword id="KW-0812">Transmembrane</keyword>
<keyword id="KW-1133">Transmembrane helix</keyword>
<keyword id="KW-0813">Transport</keyword>
<name>VPS10_PYRTT</name>
<organism>
    <name type="scientific">Pyrenophora teres f. teres (strain 0-1)</name>
    <name type="common">Barley net blotch fungus</name>
    <name type="synonym">Drechslera teres f. teres</name>
    <dbReference type="NCBI Taxonomy" id="861557"/>
    <lineage>
        <taxon>Eukaryota</taxon>
        <taxon>Fungi</taxon>
        <taxon>Dikarya</taxon>
        <taxon>Ascomycota</taxon>
        <taxon>Pezizomycotina</taxon>
        <taxon>Dothideomycetes</taxon>
        <taxon>Pleosporomycetidae</taxon>
        <taxon>Pleosporales</taxon>
        <taxon>Pleosporineae</taxon>
        <taxon>Pleosporaceae</taxon>
        <taxon>Pyrenophora</taxon>
    </lineage>
</organism>
<gene>
    <name type="primary">vps10</name>
    <name type="ORF">PTT_03507</name>
</gene>
<accession>E3RE00</accession>
<proteinExistence type="inferred from homology"/>
<sequence length="1490" mass="167500">MKHLKGLLLPALLALASSAAAKDPLVETTPFKNELVNLMYFDDSGVALVQELDNGKIFRSHDAGKGWKEIKNVKGLGIMKSPYDNKVALILGEKKHWITFDQGENWDSFETELPPSPQSPVGWHAQDNKKILLNEIENCFTAPCLGRTYYTTDGFKTDPKVLVDNRRMCQWAKASERFLQGMDKHDDRILCITRGKYSDRSKDFRLLMSDNFFKETEEPVMSSGRTVQGMANMAAVKGYIVAAAKAEHSSELALYVTQDTDSWHHALFGDHKIEEDAYTILESTNYSIQVDVMTSKYVTMGNLYTSNSNGTYFTKNVEHTNRNEAGYVDFEKIANIQGVVLVNTVDNYKEVEKSGQSKKLKSRISFDDGRSFEKLTVKGKDGELHLHSVTNLHNSGRVFSSPAPGIVMGVGNTGEFLGKYTDGDLYVSDDAGLTWELALEEAHKYEFGDQGSVLVAVFDEGDTDEIRYSFKHGRKDSWQKIKLDYKIRARELTTLPDSTSLKFIVYASRKKDGGGREHVIVHLDFSDILKKCGDSDFDDEWSVRKDADGDPSCVMGHKQLFRRRKWDAECSIGELFKDPVPKFKPCDCDKFRDYECDFNFTPAGEGKEKKCEPGESFSLPKGACDGDAKSYKGSSGWRKIPGNQCKGETERDKQVERECKDAERPRPKTDKITSEITKFKGSNFMEQYYLERNTQSDGKDNERDKDETVVMLTDERTAYITHDHGKKWKKAVDDEIVRIYPHQYETNNVYFLTASKKVYYSKDRGLHDSINSFEAPVMPNTDMLPIMQFHPKQKDWIIWLGGKNCEKVGNKDCHTVAYVSQKNGEDSSWESLVPFVKKCAFVWREAGRSVKEEQVFCEQHTNEEKNAPLELISSDDWFKKKDVKFKSVVEFATMSEFIIVATKAEDNTLRLDASLDAHTFAEAKFPPKFFDIHQTAYTVLDSSTHAVFLHVTVNPQRDQEYGSIIKSNSNGTSYVMSLAAVNRNSEGYVDFEKMQGLEGVAVANVVVNVDEVNKGSKKKKQSRITHNDGADWEPLQAPEKDSDDKPYDCDVANREKCGLHIHGYTERADPREMYSSPTAVGLMLAVGNVGPELSTFGEANTFMTTDAGITWKEIKKGTYAWEFGDQGSVIVIVRRGEDTDHVYYSTDSGAKWDLYQFADHKMRVEAITTVPSDTSLNFLLWGKDSKELFAVNLDFSGLPEFQKECKLDEHDPTKGDYDLWSPQHPLQQDEPECLFGHVAQYHRKKRDVKCRNGQRIDQMHDIARNCSCTRRDYECAYNYERDSSGDCVLVPGLSLPDPSKVCSNKNVKEYYANTRFRKIPLSTCQGGTEYDKTGDVHPCPGFEEDFQKNHGVGGFTLFLAIVLPFAAAGGVGYWVWRNWDGKFGRIRLGEPGGGSAFDSDAPWVRWPIAAVSGLVAVIAALPLVVGSVWRWVAGRMGGGGGAGGYAGLGGSGYGRAYTSRSSFARGRGEYSVVDPDEGELLGDEESDEDV</sequence>
<evidence type="ECO:0000250" key="1"/>
<evidence type="ECO:0000255" key="2"/>
<evidence type="ECO:0000256" key="3">
    <source>
        <dbReference type="SAM" id="MobiDB-lite"/>
    </source>
</evidence>
<evidence type="ECO:0000305" key="4"/>
<dbReference type="EMBL" id="GL532319">
    <property type="protein sequence ID" value="EFQ96053.1"/>
    <property type="molecule type" value="Genomic_DNA"/>
</dbReference>
<dbReference type="RefSeq" id="XP_003295855.1">
    <property type="nucleotide sequence ID" value="XM_003295807.1"/>
</dbReference>
<dbReference type="SMR" id="E3RE00"/>
<dbReference type="STRING" id="861557.E3RE00"/>
<dbReference type="GlyCosmos" id="E3RE00">
    <property type="glycosylation" value="4 sites, No reported glycans"/>
</dbReference>
<dbReference type="EnsemblFungi" id="EFQ96053">
    <property type="protein sequence ID" value="EFQ96053"/>
    <property type="gene ID" value="PTT_03507"/>
</dbReference>
<dbReference type="KEGG" id="pte:PTT_03507"/>
<dbReference type="eggNOG" id="KOG3511">
    <property type="taxonomic scope" value="Eukaryota"/>
</dbReference>
<dbReference type="HOGENOM" id="CLU_000700_0_0_1"/>
<dbReference type="OrthoDB" id="443634at2759"/>
<dbReference type="Proteomes" id="UP000001067">
    <property type="component" value="Unassembled WGS sequence"/>
</dbReference>
<dbReference type="GO" id="GO:0005829">
    <property type="term" value="C:cytosol"/>
    <property type="evidence" value="ECO:0007669"/>
    <property type="project" value="GOC"/>
</dbReference>
<dbReference type="GO" id="GO:0005794">
    <property type="term" value="C:Golgi apparatus"/>
    <property type="evidence" value="ECO:0007669"/>
    <property type="project" value="UniProtKB-SubCell"/>
</dbReference>
<dbReference type="GO" id="GO:0016020">
    <property type="term" value="C:membrane"/>
    <property type="evidence" value="ECO:0007669"/>
    <property type="project" value="UniProtKB-KW"/>
</dbReference>
<dbReference type="GO" id="GO:0006895">
    <property type="term" value="P:Golgi to endosome transport"/>
    <property type="evidence" value="ECO:0007669"/>
    <property type="project" value="TreeGrafter"/>
</dbReference>
<dbReference type="GO" id="GO:0006896">
    <property type="term" value="P:Golgi to vacuole transport"/>
    <property type="evidence" value="ECO:0007669"/>
    <property type="project" value="TreeGrafter"/>
</dbReference>
<dbReference type="GO" id="GO:0006623">
    <property type="term" value="P:protein targeting to vacuole"/>
    <property type="evidence" value="ECO:0007669"/>
    <property type="project" value="TreeGrafter"/>
</dbReference>
<dbReference type="FunFam" id="3.30.60.270:FF:000005">
    <property type="entry name" value="Sortilin"/>
    <property type="match status" value="1"/>
</dbReference>
<dbReference type="Gene3D" id="2.10.70.80">
    <property type="match status" value="2"/>
</dbReference>
<dbReference type="Gene3D" id="3.30.60.270">
    <property type="match status" value="2"/>
</dbReference>
<dbReference type="Gene3D" id="2.130.10.10">
    <property type="entry name" value="YVTN repeat-like/Quinoprotein amine dehydrogenase"/>
    <property type="match status" value="1"/>
</dbReference>
<dbReference type="InterPro" id="IPR031777">
    <property type="entry name" value="Sortilin_C"/>
</dbReference>
<dbReference type="InterPro" id="IPR031778">
    <property type="entry name" value="Sortilin_N"/>
</dbReference>
<dbReference type="InterPro" id="IPR006581">
    <property type="entry name" value="VPS10"/>
</dbReference>
<dbReference type="InterPro" id="IPR050310">
    <property type="entry name" value="VPS10-sortilin"/>
</dbReference>
<dbReference type="InterPro" id="IPR015943">
    <property type="entry name" value="WD40/YVTN_repeat-like_dom_sf"/>
</dbReference>
<dbReference type="PANTHER" id="PTHR12106">
    <property type="entry name" value="SORTILIN RELATED"/>
    <property type="match status" value="1"/>
</dbReference>
<dbReference type="PANTHER" id="PTHR12106:SF27">
    <property type="entry name" value="SORTILIN-RELATED RECEPTOR"/>
    <property type="match status" value="1"/>
</dbReference>
<dbReference type="Pfam" id="PF15902">
    <property type="entry name" value="Sortilin-Vps10"/>
    <property type="match status" value="2"/>
</dbReference>
<dbReference type="Pfam" id="PF15901">
    <property type="entry name" value="Sortilin_C"/>
    <property type="match status" value="2"/>
</dbReference>
<dbReference type="SMART" id="SM00602">
    <property type="entry name" value="VPS10"/>
    <property type="match status" value="2"/>
</dbReference>
<dbReference type="SUPFAM" id="SSF110296">
    <property type="entry name" value="Oligoxyloglucan reducing end-specific cellobiohydrolase"/>
    <property type="match status" value="2"/>
</dbReference>
<protein>
    <recommendedName>
        <fullName>Vacuolar protein sorting/targeting protein 10</fullName>
    </recommendedName>
    <alternativeName>
        <fullName>Carboxypeptidase Y receptor</fullName>
        <shortName>CPY receptor</shortName>
    </alternativeName>
    <alternativeName>
        <fullName>Sortilin vps10</fullName>
    </alternativeName>
    <alternativeName>
        <fullName>Vacuolar carboxypeptidase sorting receptor vps10</fullName>
    </alternativeName>
</protein>
<reference key="1">
    <citation type="journal article" date="2010" name="Genome Biol.">
        <title>A first genome assembly of the barley fungal pathogen Pyrenophora teres f. teres.</title>
        <authorList>
            <person name="Ellwood S.R."/>
            <person name="Liu Z."/>
            <person name="Syme R.A."/>
            <person name="Lai Z."/>
            <person name="Hane J.K."/>
            <person name="Keiper F."/>
            <person name="Moffat C.S."/>
            <person name="Oliver R.P."/>
            <person name="Friesen T.L."/>
        </authorList>
    </citation>
    <scope>NUCLEOTIDE SEQUENCE [LARGE SCALE GENOMIC DNA]</scope>
    <source>
        <strain>0-1</strain>
    </source>
</reference>